<reference key="1">
    <citation type="submission" date="2007-10" db="EMBL/GenBank/DDBJ databases">
        <title>Complete genome of Alkaliphilus oremlandii OhILAs.</title>
        <authorList>
            <person name="Copeland A."/>
            <person name="Lucas S."/>
            <person name="Lapidus A."/>
            <person name="Barry K."/>
            <person name="Detter J.C."/>
            <person name="Glavina del Rio T."/>
            <person name="Hammon N."/>
            <person name="Israni S."/>
            <person name="Dalin E."/>
            <person name="Tice H."/>
            <person name="Pitluck S."/>
            <person name="Chain P."/>
            <person name="Malfatti S."/>
            <person name="Shin M."/>
            <person name="Vergez L."/>
            <person name="Schmutz J."/>
            <person name="Larimer F."/>
            <person name="Land M."/>
            <person name="Hauser L."/>
            <person name="Kyrpides N."/>
            <person name="Mikhailova N."/>
            <person name="Stolz J.F."/>
            <person name="Dawson A."/>
            <person name="Fisher E."/>
            <person name="Crable B."/>
            <person name="Perera E."/>
            <person name="Lisak J."/>
            <person name="Ranganathan M."/>
            <person name="Basu P."/>
            <person name="Richardson P."/>
        </authorList>
    </citation>
    <scope>NUCLEOTIDE SEQUENCE [LARGE SCALE GENOMIC DNA]</scope>
    <source>
        <strain>OhILAs</strain>
    </source>
</reference>
<feature type="chain" id="PRO_1000057125" description="LexA repressor">
    <location>
        <begin position="1"/>
        <end position="206"/>
    </location>
</feature>
<feature type="DNA-binding region" description="H-T-H motif" evidence="1">
    <location>
        <begin position="29"/>
        <end position="49"/>
    </location>
</feature>
<feature type="active site" description="For autocatalytic cleavage activity" evidence="1">
    <location>
        <position position="130"/>
    </location>
</feature>
<feature type="active site" description="For autocatalytic cleavage activity" evidence="1">
    <location>
        <position position="167"/>
    </location>
</feature>
<feature type="site" description="Cleavage; by autolysis" evidence="1">
    <location>
        <begin position="95"/>
        <end position="96"/>
    </location>
</feature>
<sequence>MYEDLNGKQLEILNYMKMEINKRGYPPSVREICEAVGLRSTSTVHGHLAKLEDKGYIRRDPTKPRAIEILSNDPFSDYSHNKEMVQVPIVGKVTAGQPILATENIEDTFPLPLNFIDHGNTFILNVKGESMIEAGILDNDYVVIRQQSTASNGDIVVALIDDEATVKRFFKESDHIRLQPENSLMDPILLKDVVILGKVIGVFRKL</sequence>
<name>LEXA_ALKOO</name>
<proteinExistence type="inferred from homology"/>
<keyword id="KW-0068">Autocatalytic cleavage</keyword>
<keyword id="KW-0227">DNA damage</keyword>
<keyword id="KW-0234">DNA repair</keyword>
<keyword id="KW-0235">DNA replication</keyword>
<keyword id="KW-0238">DNA-binding</keyword>
<keyword id="KW-0378">Hydrolase</keyword>
<keyword id="KW-1185">Reference proteome</keyword>
<keyword id="KW-0678">Repressor</keyword>
<keyword id="KW-0742">SOS response</keyword>
<keyword id="KW-0804">Transcription</keyword>
<keyword id="KW-0805">Transcription regulation</keyword>
<accession>A8MFC9</accession>
<dbReference type="EC" id="3.4.21.88" evidence="1"/>
<dbReference type="EMBL" id="CP000853">
    <property type="protein sequence ID" value="ABW19092.1"/>
    <property type="molecule type" value="Genomic_DNA"/>
</dbReference>
<dbReference type="RefSeq" id="WP_012159404.1">
    <property type="nucleotide sequence ID" value="NC_009922.1"/>
</dbReference>
<dbReference type="SMR" id="A8MFC9"/>
<dbReference type="STRING" id="350688.Clos_1549"/>
<dbReference type="MEROPS" id="S24.001"/>
<dbReference type="KEGG" id="aoe:Clos_1549"/>
<dbReference type="eggNOG" id="COG1974">
    <property type="taxonomic scope" value="Bacteria"/>
</dbReference>
<dbReference type="HOGENOM" id="CLU_066192_45_1_9"/>
<dbReference type="OrthoDB" id="9802364at2"/>
<dbReference type="Proteomes" id="UP000000269">
    <property type="component" value="Chromosome"/>
</dbReference>
<dbReference type="GO" id="GO:0003677">
    <property type="term" value="F:DNA binding"/>
    <property type="evidence" value="ECO:0007669"/>
    <property type="project" value="UniProtKB-UniRule"/>
</dbReference>
<dbReference type="GO" id="GO:0004252">
    <property type="term" value="F:serine-type endopeptidase activity"/>
    <property type="evidence" value="ECO:0007669"/>
    <property type="project" value="UniProtKB-UniRule"/>
</dbReference>
<dbReference type="GO" id="GO:0006281">
    <property type="term" value="P:DNA repair"/>
    <property type="evidence" value="ECO:0007669"/>
    <property type="project" value="UniProtKB-UniRule"/>
</dbReference>
<dbReference type="GO" id="GO:0006260">
    <property type="term" value="P:DNA replication"/>
    <property type="evidence" value="ECO:0007669"/>
    <property type="project" value="UniProtKB-UniRule"/>
</dbReference>
<dbReference type="GO" id="GO:0045892">
    <property type="term" value="P:negative regulation of DNA-templated transcription"/>
    <property type="evidence" value="ECO:0007669"/>
    <property type="project" value="UniProtKB-UniRule"/>
</dbReference>
<dbReference type="GO" id="GO:0006508">
    <property type="term" value="P:proteolysis"/>
    <property type="evidence" value="ECO:0007669"/>
    <property type="project" value="InterPro"/>
</dbReference>
<dbReference type="GO" id="GO:0009432">
    <property type="term" value="P:SOS response"/>
    <property type="evidence" value="ECO:0007669"/>
    <property type="project" value="UniProtKB-UniRule"/>
</dbReference>
<dbReference type="CDD" id="cd00090">
    <property type="entry name" value="HTH_ARSR"/>
    <property type="match status" value="1"/>
</dbReference>
<dbReference type="CDD" id="cd06529">
    <property type="entry name" value="S24_LexA-like"/>
    <property type="match status" value="1"/>
</dbReference>
<dbReference type="FunFam" id="1.10.10.10:FF:000009">
    <property type="entry name" value="LexA repressor"/>
    <property type="match status" value="1"/>
</dbReference>
<dbReference type="FunFam" id="2.10.109.10:FF:000001">
    <property type="entry name" value="LexA repressor"/>
    <property type="match status" value="1"/>
</dbReference>
<dbReference type="Gene3D" id="2.10.109.10">
    <property type="entry name" value="Umud Fragment, subunit A"/>
    <property type="match status" value="1"/>
</dbReference>
<dbReference type="Gene3D" id="1.10.10.10">
    <property type="entry name" value="Winged helix-like DNA-binding domain superfamily/Winged helix DNA-binding domain"/>
    <property type="match status" value="1"/>
</dbReference>
<dbReference type="HAMAP" id="MF_00015">
    <property type="entry name" value="LexA"/>
    <property type="match status" value="1"/>
</dbReference>
<dbReference type="InterPro" id="IPR011991">
    <property type="entry name" value="ArsR-like_HTH"/>
</dbReference>
<dbReference type="InterPro" id="IPR006200">
    <property type="entry name" value="LexA"/>
</dbReference>
<dbReference type="InterPro" id="IPR039418">
    <property type="entry name" value="LexA-like"/>
</dbReference>
<dbReference type="InterPro" id="IPR036286">
    <property type="entry name" value="LexA/Signal_pep-like_sf"/>
</dbReference>
<dbReference type="InterPro" id="IPR006199">
    <property type="entry name" value="LexA_DNA-bd_dom"/>
</dbReference>
<dbReference type="InterPro" id="IPR050077">
    <property type="entry name" value="LexA_repressor"/>
</dbReference>
<dbReference type="InterPro" id="IPR006197">
    <property type="entry name" value="Peptidase_S24_LexA"/>
</dbReference>
<dbReference type="InterPro" id="IPR015927">
    <property type="entry name" value="Peptidase_S24_S26A/B/C"/>
</dbReference>
<dbReference type="InterPro" id="IPR036388">
    <property type="entry name" value="WH-like_DNA-bd_sf"/>
</dbReference>
<dbReference type="InterPro" id="IPR036390">
    <property type="entry name" value="WH_DNA-bd_sf"/>
</dbReference>
<dbReference type="NCBIfam" id="TIGR00498">
    <property type="entry name" value="lexA"/>
    <property type="match status" value="1"/>
</dbReference>
<dbReference type="PANTHER" id="PTHR33516">
    <property type="entry name" value="LEXA REPRESSOR"/>
    <property type="match status" value="1"/>
</dbReference>
<dbReference type="PANTHER" id="PTHR33516:SF2">
    <property type="entry name" value="LEXA REPRESSOR-RELATED"/>
    <property type="match status" value="1"/>
</dbReference>
<dbReference type="Pfam" id="PF01726">
    <property type="entry name" value="LexA_DNA_bind"/>
    <property type="match status" value="1"/>
</dbReference>
<dbReference type="Pfam" id="PF00717">
    <property type="entry name" value="Peptidase_S24"/>
    <property type="match status" value="1"/>
</dbReference>
<dbReference type="PRINTS" id="PR00726">
    <property type="entry name" value="LEXASERPTASE"/>
</dbReference>
<dbReference type="SUPFAM" id="SSF51306">
    <property type="entry name" value="LexA/Signal peptidase"/>
    <property type="match status" value="1"/>
</dbReference>
<dbReference type="SUPFAM" id="SSF46785">
    <property type="entry name" value="Winged helix' DNA-binding domain"/>
    <property type="match status" value="1"/>
</dbReference>
<organism>
    <name type="scientific">Alkaliphilus oremlandii (strain OhILAs)</name>
    <name type="common">Clostridium oremlandii (strain OhILAs)</name>
    <dbReference type="NCBI Taxonomy" id="350688"/>
    <lineage>
        <taxon>Bacteria</taxon>
        <taxon>Bacillati</taxon>
        <taxon>Bacillota</taxon>
        <taxon>Clostridia</taxon>
        <taxon>Peptostreptococcales</taxon>
        <taxon>Natronincolaceae</taxon>
        <taxon>Alkaliphilus</taxon>
    </lineage>
</organism>
<gene>
    <name evidence="1" type="primary">lexA</name>
    <name type="ordered locus">Clos_1549</name>
</gene>
<comment type="function">
    <text evidence="1">Represses a number of genes involved in the response to DNA damage (SOS response), including recA and lexA. In the presence of single-stranded DNA, RecA interacts with LexA causing an autocatalytic cleavage which disrupts the DNA-binding part of LexA, leading to derepression of the SOS regulon and eventually DNA repair.</text>
</comment>
<comment type="catalytic activity">
    <reaction evidence="1">
        <text>Hydrolysis of Ala-|-Gly bond in repressor LexA.</text>
        <dbReference type="EC" id="3.4.21.88"/>
    </reaction>
</comment>
<comment type="subunit">
    <text evidence="1">Homodimer.</text>
</comment>
<comment type="similarity">
    <text evidence="1">Belongs to the peptidase S24 family.</text>
</comment>
<evidence type="ECO:0000255" key="1">
    <source>
        <dbReference type="HAMAP-Rule" id="MF_00015"/>
    </source>
</evidence>
<protein>
    <recommendedName>
        <fullName evidence="1">LexA repressor</fullName>
        <ecNumber evidence="1">3.4.21.88</ecNumber>
    </recommendedName>
</protein>